<sequence>MRRLYNFLSNSEKRNLRNRKKLNSGVKRLRISIFKSNRHFYAQLINDEKGVTLTSVSTLDAKIKDVCKRGINTETIKQVSSLMIERLSNMKLEQKLVFDRGAYKYTGLVSQFAEALRSSGFKF</sequence>
<name>RL18_WOLTR</name>
<comment type="function">
    <text evidence="1">This is one of the proteins that bind and probably mediate the attachment of the 5S RNA into the large ribosomal subunit, where it forms part of the central protuberance.</text>
</comment>
<comment type="subunit">
    <text evidence="1">Part of the 50S ribosomal subunit; part of the 5S rRNA/L5/L18/L25 subcomplex. Contacts the 5S and 23S rRNAs.</text>
</comment>
<comment type="similarity">
    <text evidence="1">Belongs to the universal ribosomal protein uL18 family.</text>
</comment>
<keyword id="KW-1185">Reference proteome</keyword>
<keyword id="KW-0687">Ribonucleoprotein</keyword>
<keyword id="KW-0689">Ribosomal protein</keyword>
<keyword id="KW-0694">RNA-binding</keyword>
<keyword id="KW-0699">rRNA-binding</keyword>
<reference key="1">
    <citation type="journal article" date="2005" name="PLoS Biol.">
        <title>The Wolbachia genome of Brugia malayi: endosymbiont evolution within a human pathogenic nematode.</title>
        <authorList>
            <person name="Foster J."/>
            <person name="Ganatra M."/>
            <person name="Kamal I."/>
            <person name="Ware J."/>
            <person name="Makarova K."/>
            <person name="Ivanova N."/>
            <person name="Bhattacharyya A."/>
            <person name="Kapatral V."/>
            <person name="Kumar S."/>
            <person name="Posfai J."/>
            <person name="Vincze T."/>
            <person name="Ingram J."/>
            <person name="Moran L."/>
            <person name="Lapidus A."/>
            <person name="Omelchenko M."/>
            <person name="Kyrpides N."/>
            <person name="Ghedin E."/>
            <person name="Wang S."/>
            <person name="Goltsman E."/>
            <person name="Joukov V."/>
            <person name="Ostrovskaya O."/>
            <person name="Tsukerman K."/>
            <person name="Mazur M."/>
            <person name="Comb D."/>
            <person name="Koonin E."/>
            <person name="Slatko B."/>
        </authorList>
    </citation>
    <scope>NUCLEOTIDE SEQUENCE [LARGE SCALE GENOMIC DNA]</scope>
    <source>
        <strain>TRS</strain>
    </source>
</reference>
<feature type="chain" id="PRO_0000131389" description="Large ribosomal subunit protein uL18">
    <location>
        <begin position="1"/>
        <end position="123"/>
    </location>
</feature>
<protein>
    <recommendedName>
        <fullName evidence="1">Large ribosomal subunit protein uL18</fullName>
    </recommendedName>
    <alternativeName>
        <fullName evidence="2">50S ribosomal protein L18</fullName>
    </alternativeName>
</protein>
<gene>
    <name evidence="1" type="primary">rplR</name>
    <name type="ordered locus">Wbm0325</name>
</gene>
<dbReference type="EMBL" id="AE017321">
    <property type="protein sequence ID" value="AAW70914.1"/>
    <property type="molecule type" value="Genomic_DNA"/>
</dbReference>
<dbReference type="RefSeq" id="WP_011256524.1">
    <property type="nucleotide sequence ID" value="NC_006833.1"/>
</dbReference>
<dbReference type="SMR" id="Q5GSW0"/>
<dbReference type="STRING" id="292805.Wbm0325"/>
<dbReference type="KEGG" id="wbm:Wbm0325"/>
<dbReference type="eggNOG" id="COG0256">
    <property type="taxonomic scope" value="Bacteria"/>
</dbReference>
<dbReference type="HOGENOM" id="CLU_098841_0_1_5"/>
<dbReference type="Proteomes" id="UP000000534">
    <property type="component" value="Chromosome"/>
</dbReference>
<dbReference type="GO" id="GO:0022625">
    <property type="term" value="C:cytosolic large ribosomal subunit"/>
    <property type="evidence" value="ECO:0007669"/>
    <property type="project" value="TreeGrafter"/>
</dbReference>
<dbReference type="GO" id="GO:0008097">
    <property type="term" value="F:5S rRNA binding"/>
    <property type="evidence" value="ECO:0007669"/>
    <property type="project" value="TreeGrafter"/>
</dbReference>
<dbReference type="GO" id="GO:0003735">
    <property type="term" value="F:structural constituent of ribosome"/>
    <property type="evidence" value="ECO:0007669"/>
    <property type="project" value="InterPro"/>
</dbReference>
<dbReference type="GO" id="GO:0006412">
    <property type="term" value="P:translation"/>
    <property type="evidence" value="ECO:0007669"/>
    <property type="project" value="UniProtKB-UniRule"/>
</dbReference>
<dbReference type="CDD" id="cd00432">
    <property type="entry name" value="Ribosomal_L18_L5e"/>
    <property type="match status" value="1"/>
</dbReference>
<dbReference type="Gene3D" id="3.30.420.100">
    <property type="match status" value="1"/>
</dbReference>
<dbReference type="HAMAP" id="MF_01337_B">
    <property type="entry name" value="Ribosomal_uL18_B"/>
    <property type="match status" value="1"/>
</dbReference>
<dbReference type="InterPro" id="IPR004389">
    <property type="entry name" value="Ribosomal_uL18_bac-type"/>
</dbReference>
<dbReference type="InterPro" id="IPR005484">
    <property type="entry name" value="Ribosomal_uL18_bac/euk"/>
</dbReference>
<dbReference type="NCBIfam" id="TIGR00060">
    <property type="entry name" value="L18_bact"/>
    <property type="match status" value="1"/>
</dbReference>
<dbReference type="PANTHER" id="PTHR12899">
    <property type="entry name" value="39S RIBOSOMAL PROTEIN L18, MITOCHONDRIAL"/>
    <property type="match status" value="1"/>
</dbReference>
<dbReference type="PANTHER" id="PTHR12899:SF3">
    <property type="entry name" value="LARGE RIBOSOMAL SUBUNIT PROTEIN UL18M"/>
    <property type="match status" value="1"/>
</dbReference>
<dbReference type="Pfam" id="PF00861">
    <property type="entry name" value="Ribosomal_L18p"/>
    <property type="match status" value="1"/>
</dbReference>
<dbReference type="SUPFAM" id="SSF53137">
    <property type="entry name" value="Translational machinery components"/>
    <property type="match status" value="1"/>
</dbReference>
<accession>Q5GSW0</accession>
<organism>
    <name type="scientific">Wolbachia sp. subsp. Brugia malayi (strain TRS)</name>
    <dbReference type="NCBI Taxonomy" id="292805"/>
    <lineage>
        <taxon>Bacteria</taxon>
        <taxon>Pseudomonadati</taxon>
        <taxon>Pseudomonadota</taxon>
        <taxon>Alphaproteobacteria</taxon>
        <taxon>Rickettsiales</taxon>
        <taxon>Anaplasmataceae</taxon>
        <taxon>Wolbachieae</taxon>
        <taxon>Wolbachia</taxon>
    </lineage>
</organism>
<evidence type="ECO:0000255" key="1">
    <source>
        <dbReference type="HAMAP-Rule" id="MF_01337"/>
    </source>
</evidence>
<evidence type="ECO:0000305" key="2"/>
<proteinExistence type="inferred from homology"/>